<gene>
    <name evidence="1" type="primary">acpP</name>
    <name type="ordered locus">RPA3073</name>
</gene>
<accession>Q6N5A8</accession>
<evidence type="ECO:0000255" key="1">
    <source>
        <dbReference type="HAMAP-Rule" id="MF_01217"/>
    </source>
</evidence>
<evidence type="ECO:0000255" key="2">
    <source>
        <dbReference type="PROSITE-ProRule" id="PRU00258"/>
    </source>
</evidence>
<organism>
    <name type="scientific">Rhodopseudomonas palustris (strain ATCC BAA-98 / CGA009)</name>
    <dbReference type="NCBI Taxonomy" id="258594"/>
    <lineage>
        <taxon>Bacteria</taxon>
        <taxon>Pseudomonadati</taxon>
        <taxon>Pseudomonadota</taxon>
        <taxon>Alphaproteobacteria</taxon>
        <taxon>Hyphomicrobiales</taxon>
        <taxon>Nitrobacteraceae</taxon>
        <taxon>Rhodopseudomonas</taxon>
    </lineage>
</organism>
<sequence length="79" mass="8573">MSEIGERVKKIVVEHLGVEPEKVVDSASFIDDLGADSLDTVELVMAFEEEFGCEIPDDAAETILTVGDATKFLEKNAKS</sequence>
<reference key="1">
    <citation type="journal article" date="2004" name="Nat. Biotechnol.">
        <title>Complete genome sequence of the metabolically versatile photosynthetic bacterium Rhodopseudomonas palustris.</title>
        <authorList>
            <person name="Larimer F.W."/>
            <person name="Chain P."/>
            <person name="Hauser L."/>
            <person name="Lamerdin J.E."/>
            <person name="Malfatti S."/>
            <person name="Do L."/>
            <person name="Land M.L."/>
            <person name="Pelletier D.A."/>
            <person name="Beatty J.T."/>
            <person name="Lang A.S."/>
            <person name="Tabita F.R."/>
            <person name="Gibson J.L."/>
            <person name="Hanson T.E."/>
            <person name="Bobst C."/>
            <person name="Torres y Torres J.L."/>
            <person name="Peres C."/>
            <person name="Harrison F.H."/>
            <person name="Gibson J."/>
            <person name="Harwood C.S."/>
        </authorList>
    </citation>
    <scope>NUCLEOTIDE SEQUENCE [LARGE SCALE GENOMIC DNA]</scope>
    <source>
        <strain>ATCC BAA-98 / CGA009</strain>
    </source>
</reference>
<keyword id="KW-0963">Cytoplasm</keyword>
<keyword id="KW-0275">Fatty acid biosynthesis</keyword>
<keyword id="KW-0276">Fatty acid metabolism</keyword>
<keyword id="KW-0444">Lipid biosynthesis</keyword>
<keyword id="KW-0443">Lipid metabolism</keyword>
<keyword id="KW-0596">Phosphopantetheine</keyword>
<keyword id="KW-0597">Phosphoprotein</keyword>
<name>ACP_RHOPA</name>
<dbReference type="EMBL" id="BX572602">
    <property type="protein sequence ID" value="CAE28514.1"/>
    <property type="molecule type" value="Genomic_DNA"/>
</dbReference>
<dbReference type="RefSeq" id="WP_002716125.1">
    <property type="nucleotide sequence ID" value="NZ_CP116810.1"/>
</dbReference>
<dbReference type="SMR" id="Q6N5A8"/>
<dbReference type="STRING" id="258594.RPA3073"/>
<dbReference type="eggNOG" id="COG0236">
    <property type="taxonomic scope" value="Bacteria"/>
</dbReference>
<dbReference type="HOGENOM" id="CLU_108696_5_1_5"/>
<dbReference type="PhylomeDB" id="Q6N5A8"/>
<dbReference type="UniPathway" id="UPA00094"/>
<dbReference type="GO" id="GO:0005829">
    <property type="term" value="C:cytosol"/>
    <property type="evidence" value="ECO:0007669"/>
    <property type="project" value="TreeGrafter"/>
</dbReference>
<dbReference type="GO" id="GO:0016020">
    <property type="term" value="C:membrane"/>
    <property type="evidence" value="ECO:0007669"/>
    <property type="project" value="GOC"/>
</dbReference>
<dbReference type="GO" id="GO:0000035">
    <property type="term" value="F:acyl binding"/>
    <property type="evidence" value="ECO:0007669"/>
    <property type="project" value="TreeGrafter"/>
</dbReference>
<dbReference type="GO" id="GO:0000036">
    <property type="term" value="F:acyl carrier activity"/>
    <property type="evidence" value="ECO:0007669"/>
    <property type="project" value="UniProtKB-UniRule"/>
</dbReference>
<dbReference type="GO" id="GO:0031177">
    <property type="term" value="F:phosphopantetheine binding"/>
    <property type="evidence" value="ECO:0007669"/>
    <property type="project" value="InterPro"/>
</dbReference>
<dbReference type="GO" id="GO:0009245">
    <property type="term" value="P:lipid A biosynthetic process"/>
    <property type="evidence" value="ECO:0007669"/>
    <property type="project" value="TreeGrafter"/>
</dbReference>
<dbReference type="FunFam" id="1.10.1200.10:FF:000012">
    <property type="entry name" value="Acyl carrier protein"/>
    <property type="match status" value="1"/>
</dbReference>
<dbReference type="Gene3D" id="1.10.1200.10">
    <property type="entry name" value="ACP-like"/>
    <property type="match status" value="1"/>
</dbReference>
<dbReference type="HAMAP" id="MF_01217">
    <property type="entry name" value="Acyl_carrier"/>
    <property type="match status" value="1"/>
</dbReference>
<dbReference type="InterPro" id="IPR003231">
    <property type="entry name" value="ACP"/>
</dbReference>
<dbReference type="InterPro" id="IPR036736">
    <property type="entry name" value="ACP-like_sf"/>
</dbReference>
<dbReference type="InterPro" id="IPR020806">
    <property type="entry name" value="PKS_PP-bd"/>
</dbReference>
<dbReference type="InterPro" id="IPR009081">
    <property type="entry name" value="PP-bd_ACP"/>
</dbReference>
<dbReference type="InterPro" id="IPR006162">
    <property type="entry name" value="Ppantetheine_attach_site"/>
</dbReference>
<dbReference type="NCBIfam" id="TIGR00517">
    <property type="entry name" value="acyl_carrier"/>
    <property type="match status" value="1"/>
</dbReference>
<dbReference type="NCBIfam" id="NF002148">
    <property type="entry name" value="PRK00982.1-2"/>
    <property type="match status" value="1"/>
</dbReference>
<dbReference type="NCBIfam" id="NF002149">
    <property type="entry name" value="PRK00982.1-3"/>
    <property type="match status" value="1"/>
</dbReference>
<dbReference type="NCBIfam" id="NF002150">
    <property type="entry name" value="PRK00982.1-4"/>
    <property type="match status" value="1"/>
</dbReference>
<dbReference type="NCBIfam" id="NF002151">
    <property type="entry name" value="PRK00982.1-5"/>
    <property type="match status" value="1"/>
</dbReference>
<dbReference type="PANTHER" id="PTHR20863">
    <property type="entry name" value="ACYL CARRIER PROTEIN"/>
    <property type="match status" value="1"/>
</dbReference>
<dbReference type="PANTHER" id="PTHR20863:SF76">
    <property type="entry name" value="CARRIER DOMAIN-CONTAINING PROTEIN"/>
    <property type="match status" value="1"/>
</dbReference>
<dbReference type="Pfam" id="PF00550">
    <property type="entry name" value="PP-binding"/>
    <property type="match status" value="1"/>
</dbReference>
<dbReference type="SMART" id="SM00823">
    <property type="entry name" value="PKS_PP"/>
    <property type="match status" value="1"/>
</dbReference>
<dbReference type="SUPFAM" id="SSF47336">
    <property type="entry name" value="ACP-like"/>
    <property type="match status" value="1"/>
</dbReference>
<dbReference type="PROSITE" id="PS50075">
    <property type="entry name" value="CARRIER"/>
    <property type="match status" value="1"/>
</dbReference>
<dbReference type="PROSITE" id="PS00012">
    <property type="entry name" value="PHOSPHOPANTETHEINE"/>
    <property type="match status" value="1"/>
</dbReference>
<protein>
    <recommendedName>
        <fullName evidence="1">Acyl carrier protein</fullName>
        <shortName evidence="1">ACP</shortName>
    </recommendedName>
</protein>
<feature type="chain" id="PRO_1000066674" description="Acyl carrier protein">
    <location>
        <begin position="1"/>
        <end position="79"/>
    </location>
</feature>
<feature type="domain" description="Carrier" evidence="2">
    <location>
        <begin position="2"/>
        <end position="77"/>
    </location>
</feature>
<feature type="modified residue" description="O-(pantetheine 4'-phosphoryl)serine" evidence="2">
    <location>
        <position position="37"/>
    </location>
</feature>
<comment type="function">
    <text evidence="1">Carrier of the growing fatty acid chain in fatty acid biosynthesis.</text>
</comment>
<comment type="pathway">
    <text evidence="1">Lipid metabolism; fatty acid biosynthesis.</text>
</comment>
<comment type="subcellular location">
    <subcellularLocation>
        <location evidence="1">Cytoplasm</location>
    </subcellularLocation>
</comment>
<comment type="PTM">
    <text evidence="1">4'-phosphopantetheine is transferred from CoA to a specific serine of apo-ACP by AcpS. This modification is essential for activity because fatty acids are bound in thioester linkage to the sulfhydryl of the prosthetic group.</text>
</comment>
<comment type="similarity">
    <text evidence="1">Belongs to the acyl carrier protein (ACP) family.</text>
</comment>
<proteinExistence type="inferred from homology"/>